<dbReference type="EMBL" id="AP009324">
    <property type="protein sequence ID" value="BAF78517.1"/>
    <property type="molecule type" value="Genomic_DNA"/>
</dbReference>
<dbReference type="RefSeq" id="WP_000457386.1">
    <property type="nucleotide sequence ID" value="NC_009782.1"/>
</dbReference>
<dbReference type="SMR" id="A7X364"/>
<dbReference type="GeneID" id="66839833"/>
<dbReference type="KEGG" id="saw:SAHV_1634"/>
<dbReference type="HOGENOM" id="CLU_061463_3_2_9"/>
<dbReference type="GO" id="GO:0005737">
    <property type="term" value="C:cytoplasm"/>
    <property type="evidence" value="ECO:0007669"/>
    <property type="project" value="UniProtKB-ARBA"/>
</dbReference>
<dbReference type="GO" id="GO:1990904">
    <property type="term" value="C:ribonucleoprotein complex"/>
    <property type="evidence" value="ECO:0007669"/>
    <property type="project" value="UniProtKB-KW"/>
</dbReference>
<dbReference type="GO" id="GO:0005840">
    <property type="term" value="C:ribosome"/>
    <property type="evidence" value="ECO:0007669"/>
    <property type="project" value="UniProtKB-KW"/>
</dbReference>
<dbReference type="GO" id="GO:0019843">
    <property type="term" value="F:rRNA binding"/>
    <property type="evidence" value="ECO:0007669"/>
    <property type="project" value="UniProtKB-UniRule"/>
</dbReference>
<dbReference type="GO" id="GO:0003735">
    <property type="term" value="F:structural constituent of ribosome"/>
    <property type="evidence" value="ECO:0007669"/>
    <property type="project" value="InterPro"/>
</dbReference>
<dbReference type="GO" id="GO:0006412">
    <property type="term" value="P:translation"/>
    <property type="evidence" value="ECO:0007669"/>
    <property type="project" value="UniProtKB-UniRule"/>
</dbReference>
<dbReference type="HAMAP" id="MF_01363">
    <property type="entry name" value="Ribosomal_bL21"/>
    <property type="match status" value="1"/>
</dbReference>
<dbReference type="InterPro" id="IPR028909">
    <property type="entry name" value="bL21-like"/>
</dbReference>
<dbReference type="InterPro" id="IPR036164">
    <property type="entry name" value="bL21-like_sf"/>
</dbReference>
<dbReference type="InterPro" id="IPR001787">
    <property type="entry name" value="Ribosomal_bL21"/>
</dbReference>
<dbReference type="NCBIfam" id="TIGR00061">
    <property type="entry name" value="L21"/>
    <property type="match status" value="1"/>
</dbReference>
<dbReference type="PANTHER" id="PTHR21349">
    <property type="entry name" value="50S RIBOSOMAL PROTEIN L21"/>
    <property type="match status" value="1"/>
</dbReference>
<dbReference type="PANTHER" id="PTHR21349:SF0">
    <property type="entry name" value="LARGE RIBOSOMAL SUBUNIT PROTEIN BL21M"/>
    <property type="match status" value="1"/>
</dbReference>
<dbReference type="Pfam" id="PF00829">
    <property type="entry name" value="Ribosomal_L21p"/>
    <property type="match status" value="1"/>
</dbReference>
<dbReference type="SUPFAM" id="SSF141091">
    <property type="entry name" value="L21p-like"/>
    <property type="match status" value="1"/>
</dbReference>
<accession>A7X364</accession>
<keyword id="KW-0687">Ribonucleoprotein</keyword>
<keyword id="KW-0689">Ribosomal protein</keyword>
<keyword id="KW-0694">RNA-binding</keyword>
<keyword id="KW-0699">rRNA-binding</keyword>
<organism>
    <name type="scientific">Staphylococcus aureus (strain Mu3 / ATCC 700698)</name>
    <dbReference type="NCBI Taxonomy" id="418127"/>
    <lineage>
        <taxon>Bacteria</taxon>
        <taxon>Bacillati</taxon>
        <taxon>Bacillota</taxon>
        <taxon>Bacilli</taxon>
        <taxon>Bacillales</taxon>
        <taxon>Staphylococcaceae</taxon>
        <taxon>Staphylococcus</taxon>
    </lineage>
</organism>
<feature type="chain" id="PRO_1000067904" description="Large ribosomal subunit protein bL21">
    <location>
        <begin position="1"/>
        <end position="102"/>
    </location>
</feature>
<feature type="region of interest" description="Disordered" evidence="2">
    <location>
        <begin position="80"/>
        <end position="102"/>
    </location>
</feature>
<feature type="compositionally biased region" description="Basic residues" evidence="2">
    <location>
        <begin position="80"/>
        <end position="91"/>
    </location>
</feature>
<sequence>MFAIIETGGKQIKVEEGQEIFVEKLDVNEGDTFTFDKVLFVGGDSVKVGAPTVEGATVTATVNKQGRGKKITVFTYKRRKNSKRKKGHRQPYTKLTIDKINA</sequence>
<protein>
    <recommendedName>
        <fullName evidence="1">Large ribosomal subunit protein bL21</fullName>
    </recommendedName>
    <alternativeName>
        <fullName evidence="3">50S ribosomal protein L21</fullName>
    </alternativeName>
</protein>
<gene>
    <name evidence="1" type="primary">rplU</name>
    <name type="ordered locus">SAHV_1634</name>
</gene>
<evidence type="ECO:0000255" key="1">
    <source>
        <dbReference type="HAMAP-Rule" id="MF_01363"/>
    </source>
</evidence>
<evidence type="ECO:0000256" key="2">
    <source>
        <dbReference type="SAM" id="MobiDB-lite"/>
    </source>
</evidence>
<evidence type="ECO:0000305" key="3"/>
<proteinExistence type="inferred from homology"/>
<comment type="function">
    <text evidence="1">This protein binds to 23S rRNA in the presence of protein L20.</text>
</comment>
<comment type="subunit">
    <text evidence="1">Part of the 50S ribosomal subunit. Contacts protein L20.</text>
</comment>
<comment type="similarity">
    <text evidence="1">Belongs to the bacterial ribosomal protein bL21 family.</text>
</comment>
<reference key="1">
    <citation type="journal article" date="2008" name="Antimicrob. Agents Chemother.">
        <title>Mutated response regulator graR is responsible for phenotypic conversion of Staphylococcus aureus from heterogeneous vancomycin-intermediate resistance to vancomycin-intermediate resistance.</title>
        <authorList>
            <person name="Neoh H.-M."/>
            <person name="Cui L."/>
            <person name="Yuzawa H."/>
            <person name="Takeuchi F."/>
            <person name="Matsuo M."/>
            <person name="Hiramatsu K."/>
        </authorList>
    </citation>
    <scope>NUCLEOTIDE SEQUENCE [LARGE SCALE GENOMIC DNA]</scope>
    <source>
        <strain>Mu3 / ATCC 700698</strain>
    </source>
</reference>
<name>RL21_STAA1</name>